<dbReference type="EMBL" id="CU928145">
    <property type="protein sequence ID" value="CAU96688.1"/>
    <property type="molecule type" value="Genomic_DNA"/>
</dbReference>
<dbReference type="RefSeq" id="WP_000042533.1">
    <property type="nucleotide sequence ID" value="NZ_CP028304.1"/>
</dbReference>
<dbReference type="SMR" id="B7LC61"/>
<dbReference type="GeneID" id="93776651"/>
<dbReference type="KEGG" id="eck:EC55989_0822"/>
<dbReference type="HOGENOM" id="CLU_009621_2_1_6"/>
<dbReference type="Proteomes" id="UP000000746">
    <property type="component" value="Chromosome"/>
</dbReference>
<dbReference type="GO" id="GO:0005737">
    <property type="term" value="C:cytoplasm"/>
    <property type="evidence" value="ECO:0007669"/>
    <property type="project" value="UniProtKB-SubCell"/>
</dbReference>
<dbReference type="GO" id="GO:0009380">
    <property type="term" value="C:excinuclease repair complex"/>
    <property type="evidence" value="ECO:0007669"/>
    <property type="project" value="InterPro"/>
</dbReference>
<dbReference type="GO" id="GO:0005524">
    <property type="term" value="F:ATP binding"/>
    <property type="evidence" value="ECO:0007669"/>
    <property type="project" value="UniProtKB-UniRule"/>
</dbReference>
<dbReference type="GO" id="GO:0016887">
    <property type="term" value="F:ATP hydrolysis activity"/>
    <property type="evidence" value="ECO:0007669"/>
    <property type="project" value="InterPro"/>
</dbReference>
<dbReference type="GO" id="GO:0003677">
    <property type="term" value="F:DNA binding"/>
    <property type="evidence" value="ECO:0007669"/>
    <property type="project" value="UniProtKB-UniRule"/>
</dbReference>
<dbReference type="GO" id="GO:0009381">
    <property type="term" value="F:excinuclease ABC activity"/>
    <property type="evidence" value="ECO:0007669"/>
    <property type="project" value="UniProtKB-UniRule"/>
</dbReference>
<dbReference type="GO" id="GO:0004386">
    <property type="term" value="F:helicase activity"/>
    <property type="evidence" value="ECO:0007669"/>
    <property type="project" value="UniProtKB-KW"/>
</dbReference>
<dbReference type="GO" id="GO:0006289">
    <property type="term" value="P:nucleotide-excision repair"/>
    <property type="evidence" value="ECO:0007669"/>
    <property type="project" value="UniProtKB-UniRule"/>
</dbReference>
<dbReference type="GO" id="GO:0009432">
    <property type="term" value="P:SOS response"/>
    <property type="evidence" value="ECO:0007669"/>
    <property type="project" value="UniProtKB-UniRule"/>
</dbReference>
<dbReference type="CDD" id="cd17916">
    <property type="entry name" value="DEXHc_UvrB"/>
    <property type="match status" value="1"/>
</dbReference>
<dbReference type="CDD" id="cd18790">
    <property type="entry name" value="SF2_C_UvrB"/>
    <property type="match status" value="1"/>
</dbReference>
<dbReference type="FunFam" id="3.40.50.300:FF:000257">
    <property type="entry name" value="UvrABC system protein B"/>
    <property type="match status" value="1"/>
</dbReference>
<dbReference type="FunFam" id="3.40.50.300:FF:000401">
    <property type="entry name" value="UvrABC system protein B"/>
    <property type="match status" value="1"/>
</dbReference>
<dbReference type="FunFam" id="3.40.50.300:FF:000477">
    <property type="entry name" value="UvrABC system protein B"/>
    <property type="match status" value="1"/>
</dbReference>
<dbReference type="Gene3D" id="3.40.50.300">
    <property type="entry name" value="P-loop containing nucleotide triphosphate hydrolases"/>
    <property type="match status" value="3"/>
</dbReference>
<dbReference type="Gene3D" id="4.10.860.10">
    <property type="entry name" value="UVR domain"/>
    <property type="match status" value="1"/>
</dbReference>
<dbReference type="HAMAP" id="MF_00204">
    <property type="entry name" value="UvrB"/>
    <property type="match status" value="1"/>
</dbReference>
<dbReference type="InterPro" id="IPR006935">
    <property type="entry name" value="Helicase/UvrB_N"/>
</dbReference>
<dbReference type="InterPro" id="IPR014001">
    <property type="entry name" value="Helicase_ATP-bd"/>
</dbReference>
<dbReference type="InterPro" id="IPR001650">
    <property type="entry name" value="Helicase_C-like"/>
</dbReference>
<dbReference type="InterPro" id="IPR027417">
    <property type="entry name" value="P-loop_NTPase"/>
</dbReference>
<dbReference type="InterPro" id="IPR001943">
    <property type="entry name" value="UVR_dom"/>
</dbReference>
<dbReference type="InterPro" id="IPR036876">
    <property type="entry name" value="UVR_dom_sf"/>
</dbReference>
<dbReference type="InterPro" id="IPR004807">
    <property type="entry name" value="UvrB"/>
</dbReference>
<dbReference type="InterPro" id="IPR041471">
    <property type="entry name" value="UvrB_inter"/>
</dbReference>
<dbReference type="InterPro" id="IPR024759">
    <property type="entry name" value="UvrB_YAD/RRR_dom"/>
</dbReference>
<dbReference type="NCBIfam" id="NF003673">
    <property type="entry name" value="PRK05298.1"/>
    <property type="match status" value="1"/>
</dbReference>
<dbReference type="NCBIfam" id="TIGR00631">
    <property type="entry name" value="uvrb"/>
    <property type="match status" value="1"/>
</dbReference>
<dbReference type="PANTHER" id="PTHR24029">
    <property type="entry name" value="UVRABC SYSTEM PROTEIN B"/>
    <property type="match status" value="1"/>
</dbReference>
<dbReference type="PANTHER" id="PTHR24029:SF0">
    <property type="entry name" value="UVRABC SYSTEM PROTEIN B"/>
    <property type="match status" value="1"/>
</dbReference>
<dbReference type="Pfam" id="PF00271">
    <property type="entry name" value="Helicase_C"/>
    <property type="match status" value="1"/>
</dbReference>
<dbReference type="Pfam" id="PF04851">
    <property type="entry name" value="ResIII"/>
    <property type="match status" value="1"/>
</dbReference>
<dbReference type="Pfam" id="PF02151">
    <property type="entry name" value="UVR"/>
    <property type="match status" value="1"/>
</dbReference>
<dbReference type="Pfam" id="PF12344">
    <property type="entry name" value="UvrB"/>
    <property type="match status" value="1"/>
</dbReference>
<dbReference type="Pfam" id="PF17757">
    <property type="entry name" value="UvrB_inter"/>
    <property type="match status" value="1"/>
</dbReference>
<dbReference type="SMART" id="SM00487">
    <property type="entry name" value="DEXDc"/>
    <property type="match status" value="1"/>
</dbReference>
<dbReference type="SMART" id="SM00490">
    <property type="entry name" value="HELICc"/>
    <property type="match status" value="1"/>
</dbReference>
<dbReference type="SUPFAM" id="SSF46600">
    <property type="entry name" value="C-terminal UvrC-binding domain of UvrB"/>
    <property type="match status" value="1"/>
</dbReference>
<dbReference type="SUPFAM" id="SSF52540">
    <property type="entry name" value="P-loop containing nucleoside triphosphate hydrolases"/>
    <property type="match status" value="2"/>
</dbReference>
<dbReference type="PROSITE" id="PS51192">
    <property type="entry name" value="HELICASE_ATP_BIND_1"/>
    <property type="match status" value="1"/>
</dbReference>
<dbReference type="PROSITE" id="PS51194">
    <property type="entry name" value="HELICASE_CTER"/>
    <property type="match status" value="1"/>
</dbReference>
<dbReference type="PROSITE" id="PS50151">
    <property type="entry name" value="UVR"/>
    <property type="match status" value="1"/>
</dbReference>
<evidence type="ECO:0000255" key="1">
    <source>
        <dbReference type="HAMAP-Rule" id="MF_00204"/>
    </source>
</evidence>
<evidence type="ECO:0000256" key="2">
    <source>
        <dbReference type="SAM" id="MobiDB-lite"/>
    </source>
</evidence>
<proteinExistence type="inferred from homology"/>
<accession>B7LC61</accession>
<name>UVRB_ECO55</name>
<organism>
    <name type="scientific">Escherichia coli (strain 55989 / EAEC)</name>
    <dbReference type="NCBI Taxonomy" id="585055"/>
    <lineage>
        <taxon>Bacteria</taxon>
        <taxon>Pseudomonadati</taxon>
        <taxon>Pseudomonadota</taxon>
        <taxon>Gammaproteobacteria</taxon>
        <taxon>Enterobacterales</taxon>
        <taxon>Enterobacteriaceae</taxon>
        <taxon>Escherichia</taxon>
    </lineage>
</organism>
<protein>
    <recommendedName>
        <fullName evidence="1">UvrABC system protein B</fullName>
        <shortName evidence="1">Protein UvrB</shortName>
    </recommendedName>
    <alternativeName>
        <fullName evidence="1">Excinuclease ABC subunit B</fullName>
    </alternativeName>
</protein>
<keyword id="KW-0067">ATP-binding</keyword>
<keyword id="KW-0963">Cytoplasm</keyword>
<keyword id="KW-0227">DNA damage</keyword>
<keyword id="KW-0228">DNA excision</keyword>
<keyword id="KW-0234">DNA repair</keyword>
<keyword id="KW-0267">Excision nuclease</keyword>
<keyword id="KW-0347">Helicase</keyword>
<keyword id="KW-0378">Hydrolase</keyword>
<keyword id="KW-0547">Nucleotide-binding</keyword>
<keyword id="KW-1185">Reference proteome</keyword>
<keyword id="KW-0742">SOS response</keyword>
<sequence>MSKPFKLNSAFKPSGDQPEAIRRLEEGLEDGLAHQTLLGVTGSGKTFTIANVIADLQRPTMVLAPNKTLAAQLYGEMKEFFPENAVEYFVSYYDYYQPEAYVPSSDTFIEKDASVNEHIEQMRLSATKAMLERRDVVVVASVSAIYGLGDPDLYLKMMLHLTVGMIIDQRAILRRLAELQYARNDQAFQRGTFRVRGEVIDIFPAESDDIALRVELFDEEVERLSLFDPLTGQIVSTIPRFTIYPKTHYVTPRERIVQAMEEIKEELAARRKVLLENNKLLEEQRLTQRTQFDLEMMNELGYCSGIENYSRFLSGRGPGEPPPTLFDYLPADGLLVVDESHVTIPQIGGMYRGDRARKETLVEYGFRLPSALDNRPLKFEEFEALAPQTIYVSATPGNYELEKSGGDVVDQVVRPTGLLDPIIEVRPVATQVDDLLSEIRQRAAINERVLVTTLTKRMAEDLTEYLEEHGERVRYLHSDIDTVERMEIIRDLRLGEFDVLVGINLLREGLDMPEVSLVAILDADKEGFLRSERSLIQTIGRAARNVNGKAILYGDKITPSMAKAIGETERRREKQQKYNEEHGITPQGLNKKVVDILALGQNIAKTKAKGRGKSRPIVEPDNVPMDMSPKALQQKIHELEGLMMQHAQNLEFEEAAQIRDQLHQLRELFIAAS</sequence>
<comment type="function">
    <text evidence="1">The UvrABC repair system catalyzes the recognition and processing of DNA lesions. A damage recognition complex composed of 2 UvrA and 2 UvrB subunits scans DNA for abnormalities. Upon binding of the UvrA(2)B(2) complex to a putative damaged site, the DNA wraps around one UvrB monomer. DNA wrap is dependent on ATP binding by UvrB and probably causes local melting of the DNA helix, facilitating insertion of UvrB beta-hairpin between the DNA strands. Then UvrB probes one DNA strand for the presence of a lesion. If a lesion is found the UvrA subunits dissociate and the UvrB-DNA preincision complex is formed. This complex is subsequently bound by UvrC and the second UvrB is released. If no lesion is found, the DNA wraps around the other UvrB subunit that will check the other stand for damage.</text>
</comment>
<comment type="subunit">
    <text evidence="1">Forms a heterotetramer with UvrA during the search for lesions. Interacts with UvrC in an incision complex.</text>
</comment>
<comment type="subcellular location">
    <subcellularLocation>
        <location evidence="1">Cytoplasm</location>
    </subcellularLocation>
</comment>
<comment type="domain">
    <text evidence="1">The beta-hairpin motif is involved in DNA binding.</text>
</comment>
<comment type="similarity">
    <text evidence="1">Belongs to the UvrB family.</text>
</comment>
<gene>
    <name evidence="1" type="primary">uvrB</name>
    <name type="ordered locus">EC55989_0822</name>
</gene>
<feature type="chain" id="PRO_1000200540" description="UvrABC system protein B">
    <location>
        <begin position="1"/>
        <end position="673"/>
    </location>
</feature>
<feature type="domain" description="Helicase ATP-binding" evidence="1">
    <location>
        <begin position="26"/>
        <end position="183"/>
    </location>
</feature>
<feature type="domain" description="Helicase C-terminal" evidence="1">
    <location>
        <begin position="431"/>
        <end position="597"/>
    </location>
</feature>
<feature type="domain" description="UVR" evidence="1">
    <location>
        <begin position="633"/>
        <end position="668"/>
    </location>
</feature>
<feature type="region of interest" description="Disordered" evidence="2">
    <location>
        <begin position="608"/>
        <end position="627"/>
    </location>
</feature>
<feature type="short sequence motif" description="Beta-hairpin">
    <location>
        <begin position="92"/>
        <end position="115"/>
    </location>
</feature>
<feature type="binding site" evidence="1">
    <location>
        <begin position="39"/>
        <end position="46"/>
    </location>
    <ligand>
        <name>ATP</name>
        <dbReference type="ChEBI" id="CHEBI:30616"/>
    </ligand>
</feature>
<reference key="1">
    <citation type="journal article" date="2009" name="PLoS Genet.">
        <title>Organised genome dynamics in the Escherichia coli species results in highly diverse adaptive paths.</title>
        <authorList>
            <person name="Touchon M."/>
            <person name="Hoede C."/>
            <person name="Tenaillon O."/>
            <person name="Barbe V."/>
            <person name="Baeriswyl S."/>
            <person name="Bidet P."/>
            <person name="Bingen E."/>
            <person name="Bonacorsi S."/>
            <person name="Bouchier C."/>
            <person name="Bouvet O."/>
            <person name="Calteau A."/>
            <person name="Chiapello H."/>
            <person name="Clermont O."/>
            <person name="Cruveiller S."/>
            <person name="Danchin A."/>
            <person name="Diard M."/>
            <person name="Dossat C."/>
            <person name="Karoui M.E."/>
            <person name="Frapy E."/>
            <person name="Garry L."/>
            <person name="Ghigo J.M."/>
            <person name="Gilles A.M."/>
            <person name="Johnson J."/>
            <person name="Le Bouguenec C."/>
            <person name="Lescat M."/>
            <person name="Mangenot S."/>
            <person name="Martinez-Jehanne V."/>
            <person name="Matic I."/>
            <person name="Nassif X."/>
            <person name="Oztas S."/>
            <person name="Petit M.A."/>
            <person name="Pichon C."/>
            <person name="Rouy Z."/>
            <person name="Ruf C.S."/>
            <person name="Schneider D."/>
            <person name="Tourret J."/>
            <person name="Vacherie B."/>
            <person name="Vallenet D."/>
            <person name="Medigue C."/>
            <person name="Rocha E.P.C."/>
            <person name="Denamur E."/>
        </authorList>
    </citation>
    <scope>NUCLEOTIDE SEQUENCE [LARGE SCALE GENOMIC DNA]</scope>
    <source>
        <strain>55989 / EAEC</strain>
    </source>
</reference>